<sequence length="1273" mass="140762">MNNRPIPRNQASSSLGRNDLKPGLFGRSSFRVQHYSGTNGISPIGSSPRTKISPRYSFASSFATSESSLRESSYFDERPPVQDTGVPKSSGLYYSRASPKELSSIDRINDSSFNGIVCAGKTHLGLYKFSPQDKSIDCMHDFVSAGNDGNRGSNVQMGLGKRSKRTKLSTIADVKAGFHNHKNYVAICSNSTVLSIYDINKTGSIDNPLVTNCSQHVRSVNSFDFNMVQTNLIISGGQDSCIKIWDLRSSRSRTLSRADVNINTASDSIRDVKWMPHPTACRSASQNDLRSGVGGAAGYKFASIHDSGLLLKFDLRQPNQVEKRINAHSGPGLCLNWHPYQDYISTGGRDGKCCLWYVGDGKPGTDFLQAGNTSVNTPHSMTSNLPTNLSVVPDMTINCGFPVTKLKVRPCYEKNVLNSLVSMSSMAEDFGVSIYSLARKYIPKYNLSTSSASLGFVWWDDNLIFNIDKDNRINGWYLDREPTVLDNMPKIVTRWRDIEGNGLLFIDQDRGGYQVNDEVPANIEESKKPPNQRVSINSLSGTAGGGNSGGGSNSGMIGSIKKGISQTGLTSFAGERPALSKTGLNFSNKSLATQSMNNSHSNSFSSYAGAGPGPLNEVADYSGIESPFLMTIDLPYILNNMRVSQLPPERKSLYSPEVQAIRESPVKVFKFLAKELEFSYMQEGRSGEMKNATQLSNVNEDTTKKDLMVKFGISEKSTWTALVNKKNEAVEAISKKSVSTKEGSESLIESDGESSAKSHESDDNSSDADKKENAKDGTMHVQEKIDILLELIPICGHNASVYSYIDDLPNFKIWILIRDSLLWDLERLSVEYPDEKLPETQSTDQIGQPITMGNDDSLASDTRSYMTSDLNYFVEEHPRALRSDSDEPKDHKKPLSGLKSQLTKIQETEASIDDSLNPPKMLKKPDNPIKQEQIGSRLNDDSDSAVLEDDDNEEKSDFDTQIKGIPITNKRQPRQSFIDTYMGGLKSPIGSSNANNEFFMGRVGHSLGHSSPGSKGSPMASLNNGEFTYPGFKRMSSRNDRRSSGSLFLSPLKRRESSTAEFFNKSPMRPLSPVAPVSSFKSNPTEFLPPWNTRRLLKQIFKQAVEMGNILLVVNILFLFQNLYQLTSTEVLKNTLAQFIKILHKHELFELSAAILKCSPWEVVINADGGQSLVPIFCDKCGKLITNEPSKEKFTLEAQEKGNSMPLQRFGYWYCDSCKKPNTLCVFCERPIKTLAIGLLECGHEGHFQCLQSWFLDEGMAECPGGCMNQIRL</sequence>
<protein>
    <recommendedName>
        <fullName>Restriction of telomere capping protein 1</fullName>
    </recommendedName>
</protein>
<keyword id="KW-0479">Metal-binding</keyword>
<keyword id="KW-1185">Reference proteome</keyword>
<keyword id="KW-0677">Repeat</keyword>
<keyword id="KW-0926">Vacuole</keyword>
<keyword id="KW-0853">WD repeat</keyword>
<keyword id="KW-0862">Zinc</keyword>
<keyword id="KW-0863">Zinc-finger</keyword>
<organism>
    <name type="scientific">Zygosaccharomyces rouxii (strain ATCC 2623 / CBS 732 / NBRC 1130 / NCYC 568 / NRRL Y-229)</name>
    <dbReference type="NCBI Taxonomy" id="559307"/>
    <lineage>
        <taxon>Eukaryota</taxon>
        <taxon>Fungi</taxon>
        <taxon>Dikarya</taxon>
        <taxon>Ascomycota</taxon>
        <taxon>Saccharomycotina</taxon>
        <taxon>Saccharomycetes</taxon>
        <taxon>Saccharomycetales</taxon>
        <taxon>Saccharomycetaceae</taxon>
        <taxon>Zygosaccharomyces</taxon>
    </lineage>
</organism>
<reference key="1">
    <citation type="journal article" date="2009" name="Genome Res.">
        <title>Comparative genomics of protoploid Saccharomycetaceae.</title>
        <authorList>
            <consortium name="The Genolevures Consortium"/>
            <person name="Souciet J.-L."/>
            <person name="Dujon B."/>
            <person name="Gaillardin C."/>
            <person name="Johnston M."/>
            <person name="Baret P.V."/>
            <person name="Cliften P."/>
            <person name="Sherman D.J."/>
            <person name="Weissenbach J."/>
            <person name="Westhof E."/>
            <person name="Wincker P."/>
            <person name="Jubin C."/>
            <person name="Poulain J."/>
            <person name="Barbe V."/>
            <person name="Segurens B."/>
            <person name="Artiguenave F."/>
            <person name="Anthouard V."/>
            <person name="Vacherie B."/>
            <person name="Val M.-E."/>
            <person name="Fulton R.S."/>
            <person name="Minx P."/>
            <person name="Wilson R."/>
            <person name="Durrens P."/>
            <person name="Jean G."/>
            <person name="Marck C."/>
            <person name="Martin T."/>
            <person name="Nikolski M."/>
            <person name="Rolland T."/>
            <person name="Seret M.-L."/>
            <person name="Casaregola S."/>
            <person name="Despons L."/>
            <person name="Fairhead C."/>
            <person name="Fischer G."/>
            <person name="Lafontaine I."/>
            <person name="Leh V."/>
            <person name="Lemaire M."/>
            <person name="de Montigny J."/>
            <person name="Neuveglise C."/>
            <person name="Thierry A."/>
            <person name="Blanc-Lenfle I."/>
            <person name="Bleykasten C."/>
            <person name="Diffels J."/>
            <person name="Fritsch E."/>
            <person name="Frangeul L."/>
            <person name="Goeffon A."/>
            <person name="Jauniaux N."/>
            <person name="Kachouri-Lafond R."/>
            <person name="Payen C."/>
            <person name="Potier S."/>
            <person name="Pribylova L."/>
            <person name="Ozanne C."/>
            <person name="Richard G.-F."/>
            <person name="Sacerdot C."/>
            <person name="Straub M.-L."/>
            <person name="Talla E."/>
        </authorList>
    </citation>
    <scope>NUCLEOTIDE SEQUENCE [LARGE SCALE GENOMIC DNA]</scope>
    <source>
        <strain>ATCC 2623 / CBS 732 / BCRC 21506 / NBRC 1130 / NCYC 568 / NRRL Y-229</strain>
    </source>
</reference>
<accession>C5DSV0</accession>
<evidence type="ECO:0000250" key="1"/>
<evidence type="ECO:0000255" key="2">
    <source>
        <dbReference type="PROSITE-ProRule" id="PRU00175"/>
    </source>
</evidence>
<evidence type="ECO:0000256" key="3">
    <source>
        <dbReference type="SAM" id="MobiDB-lite"/>
    </source>
</evidence>
<evidence type="ECO:0000305" key="4"/>
<gene>
    <name type="primary">RTC1</name>
    <name type="ordered locus">ZYRO0C03190g</name>
</gene>
<proteinExistence type="inferred from homology"/>
<dbReference type="EMBL" id="CU928175">
    <property type="protein sequence ID" value="CAR26861.1"/>
    <property type="molecule type" value="Genomic_DNA"/>
</dbReference>
<dbReference type="RefSeq" id="XP_002495794.1">
    <property type="nucleotide sequence ID" value="XM_002495749.1"/>
</dbReference>
<dbReference type="SMR" id="C5DSV0"/>
<dbReference type="FunCoup" id="C5DSV0">
    <property type="interactions" value="143"/>
</dbReference>
<dbReference type="STRING" id="559307.C5DSV0"/>
<dbReference type="GeneID" id="8202989"/>
<dbReference type="KEGG" id="zro:ZYRO0C03190g"/>
<dbReference type="HOGENOM" id="CLU_008512_0_0_1"/>
<dbReference type="InParanoid" id="C5DSV0"/>
<dbReference type="Proteomes" id="UP000008536">
    <property type="component" value="Chromosome C"/>
</dbReference>
<dbReference type="GO" id="GO:0005829">
    <property type="term" value="C:cytosol"/>
    <property type="evidence" value="ECO:0007669"/>
    <property type="project" value="TreeGrafter"/>
</dbReference>
<dbReference type="GO" id="GO:0061700">
    <property type="term" value="C:GATOR2 complex"/>
    <property type="evidence" value="ECO:0007669"/>
    <property type="project" value="TreeGrafter"/>
</dbReference>
<dbReference type="GO" id="GO:0005774">
    <property type="term" value="C:vacuolar membrane"/>
    <property type="evidence" value="ECO:0007669"/>
    <property type="project" value="TreeGrafter"/>
</dbReference>
<dbReference type="GO" id="GO:0008270">
    <property type="term" value="F:zinc ion binding"/>
    <property type="evidence" value="ECO:0007669"/>
    <property type="project" value="UniProtKB-KW"/>
</dbReference>
<dbReference type="GO" id="GO:0016239">
    <property type="term" value="P:positive regulation of macroautophagy"/>
    <property type="evidence" value="ECO:0007669"/>
    <property type="project" value="TreeGrafter"/>
</dbReference>
<dbReference type="GO" id="GO:1904263">
    <property type="term" value="P:positive regulation of TORC1 signaling"/>
    <property type="evidence" value="ECO:0007669"/>
    <property type="project" value="TreeGrafter"/>
</dbReference>
<dbReference type="CDD" id="cd16488">
    <property type="entry name" value="mRING-H2-C3H3C2_Mio-like"/>
    <property type="match status" value="1"/>
</dbReference>
<dbReference type="Gene3D" id="2.130.10.10">
    <property type="entry name" value="YVTN repeat-like/Quinoprotein amine dehydrogenase"/>
    <property type="match status" value="2"/>
</dbReference>
<dbReference type="InterPro" id="IPR015943">
    <property type="entry name" value="WD40/YVTN_repeat-like_dom_sf"/>
</dbReference>
<dbReference type="InterPro" id="IPR019775">
    <property type="entry name" value="WD40_repeat_CS"/>
</dbReference>
<dbReference type="InterPro" id="IPR036322">
    <property type="entry name" value="WD40_repeat_dom_sf"/>
</dbReference>
<dbReference type="InterPro" id="IPR001680">
    <property type="entry name" value="WD40_rpt"/>
</dbReference>
<dbReference type="InterPro" id="IPR037590">
    <property type="entry name" value="WDR24"/>
</dbReference>
<dbReference type="InterPro" id="IPR049566">
    <property type="entry name" value="WDR59_RTC1-like_RING_Znf"/>
</dbReference>
<dbReference type="InterPro" id="IPR001841">
    <property type="entry name" value="Znf_RING"/>
</dbReference>
<dbReference type="PANTHER" id="PTHR46200">
    <property type="entry name" value="GATOR COMPLEX PROTEIN WDR24"/>
    <property type="match status" value="1"/>
</dbReference>
<dbReference type="PANTHER" id="PTHR46200:SF1">
    <property type="entry name" value="GATOR COMPLEX PROTEIN WDR24"/>
    <property type="match status" value="1"/>
</dbReference>
<dbReference type="Pfam" id="PF00400">
    <property type="entry name" value="WD40"/>
    <property type="match status" value="2"/>
</dbReference>
<dbReference type="Pfam" id="PF17120">
    <property type="entry name" value="zf-RING_16"/>
    <property type="match status" value="1"/>
</dbReference>
<dbReference type="SMART" id="SM00320">
    <property type="entry name" value="WD40"/>
    <property type="match status" value="3"/>
</dbReference>
<dbReference type="SUPFAM" id="SSF50978">
    <property type="entry name" value="WD40 repeat-like"/>
    <property type="match status" value="1"/>
</dbReference>
<dbReference type="PROSITE" id="PS00678">
    <property type="entry name" value="WD_REPEATS_1"/>
    <property type="match status" value="1"/>
</dbReference>
<dbReference type="PROSITE" id="PS50082">
    <property type="entry name" value="WD_REPEATS_2"/>
    <property type="match status" value="2"/>
</dbReference>
<dbReference type="PROSITE" id="PS50294">
    <property type="entry name" value="WD_REPEATS_REGION"/>
    <property type="match status" value="2"/>
</dbReference>
<dbReference type="PROSITE" id="PS50089">
    <property type="entry name" value="ZF_RING_2"/>
    <property type="match status" value="1"/>
</dbReference>
<comment type="function">
    <text evidence="1">May be involved in a process influencing telomere capping.</text>
</comment>
<comment type="subcellular location">
    <subcellularLocation>
        <location evidence="1">Vacuole</location>
    </subcellularLocation>
</comment>
<comment type="similarity">
    <text evidence="4">Belongs to the WD repeat RTC1 family.</text>
</comment>
<feature type="chain" id="PRO_0000408793" description="Restriction of telomere capping protein 1">
    <location>
        <begin position="1"/>
        <end position="1273"/>
    </location>
</feature>
<feature type="repeat" description="WD 1">
    <location>
        <begin position="119"/>
        <end position="164"/>
    </location>
</feature>
<feature type="repeat" description="WD 2">
    <location>
        <begin position="166"/>
        <end position="207"/>
    </location>
</feature>
<feature type="repeat" description="WD 3">
    <location>
        <begin position="215"/>
        <end position="255"/>
    </location>
</feature>
<feature type="repeat" description="WD 4">
    <location>
        <begin position="327"/>
        <end position="366"/>
    </location>
</feature>
<feature type="repeat" description="WD 5">
    <location>
        <begin position="448"/>
        <end position="486"/>
    </location>
</feature>
<feature type="repeat" description="WD 6">
    <location>
        <begin position="639"/>
        <end position="679"/>
    </location>
</feature>
<feature type="repeat" description="WD 7">
    <location>
        <begin position="784"/>
        <end position="824"/>
    </location>
</feature>
<feature type="repeat" description="WD 8">
    <location>
        <begin position="1058"/>
        <end position="1101"/>
    </location>
</feature>
<feature type="zinc finger region" description="RING-type; degenerate" evidence="2">
    <location>
        <begin position="1225"/>
        <end position="1267"/>
    </location>
</feature>
<feature type="region of interest" description="Disordered" evidence="3">
    <location>
        <begin position="1"/>
        <end position="20"/>
    </location>
</feature>
<feature type="region of interest" description="Disordered" evidence="3">
    <location>
        <begin position="69"/>
        <end position="93"/>
    </location>
</feature>
<feature type="region of interest" description="Disordered" evidence="3">
    <location>
        <begin position="521"/>
        <end position="559"/>
    </location>
</feature>
<feature type="region of interest" description="Disordered" evidence="3">
    <location>
        <begin position="741"/>
        <end position="777"/>
    </location>
</feature>
<feature type="region of interest" description="Disordered" evidence="3">
    <location>
        <begin position="839"/>
        <end position="861"/>
    </location>
</feature>
<feature type="region of interest" description="Disordered" evidence="3">
    <location>
        <begin position="880"/>
        <end position="971"/>
    </location>
</feature>
<feature type="compositionally biased region" description="Polar residues" evidence="3">
    <location>
        <begin position="1"/>
        <end position="16"/>
    </location>
</feature>
<feature type="compositionally biased region" description="Gly residues" evidence="3">
    <location>
        <begin position="542"/>
        <end position="553"/>
    </location>
</feature>
<feature type="compositionally biased region" description="Basic and acidic residues" evidence="3">
    <location>
        <begin position="754"/>
        <end position="777"/>
    </location>
</feature>
<feature type="compositionally biased region" description="Polar residues" evidence="3">
    <location>
        <begin position="839"/>
        <end position="848"/>
    </location>
</feature>
<feature type="compositionally biased region" description="Basic and acidic residues" evidence="3">
    <location>
        <begin position="880"/>
        <end position="890"/>
    </location>
</feature>
<feature type="compositionally biased region" description="Polar residues" evidence="3">
    <location>
        <begin position="898"/>
        <end position="909"/>
    </location>
</feature>
<feature type="compositionally biased region" description="Acidic residues" evidence="3">
    <location>
        <begin position="941"/>
        <end position="954"/>
    </location>
</feature>
<name>RTC1_ZYGRC</name>